<feature type="chain" id="PRO_0000423617" description="Plant intracellular Ras-group-related LRR protein 8">
    <location>
        <begin position="1"/>
        <end position="378"/>
    </location>
</feature>
<feature type="domain" description="Ubiquitin-like" evidence="2">
    <location>
        <begin position="10"/>
        <end position="86"/>
    </location>
</feature>
<feature type="repeat" description="LRR 1">
    <location>
        <begin position="129"/>
        <end position="152"/>
    </location>
</feature>
<feature type="repeat" description="LRR 2">
    <location>
        <begin position="153"/>
        <end position="176"/>
    </location>
</feature>
<feature type="repeat" description="LRR 3">
    <location>
        <begin position="178"/>
        <end position="201"/>
    </location>
</feature>
<feature type="repeat" description="LRR 4">
    <location>
        <begin position="202"/>
        <end position="225"/>
    </location>
</feature>
<feature type="repeat" description="LRR 5">
    <location>
        <begin position="226"/>
        <end position="250"/>
    </location>
</feature>
<feature type="repeat" description="LRR 6">
    <location>
        <begin position="252"/>
        <end position="271"/>
    </location>
</feature>
<feature type="repeat" description="LRR 7">
    <location>
        <begin position="272"/>
        <end position="293"/>
    </location>
</feature>
<feature type="repeat" description="LRR 8">
    <location>
        <begin position="294"/>
        <end position="317"/>
    </location>
</feature>
<feature type="repeat" description="LRR 9">
    <location>
        <begin position="319"/>
        <end position="344"/>
    </location>
</feature>
<feature type="region of interest" description="Disordered" evidence="3">
    <location>
        <begin position="85"/>
        <end position="120"/>
    </location>
</feature>
<feature type="compositionally biased region" description="Polar residues" evidence="3">
    <location>
        <begin position="93"/>
        <end position="106"/>
    </location>
</feature>
<accession>Q7XDQ7</accession>
<accession>Q337P4</accession>
<sequence length="378" mass="41075">MESSPPPPPPTITVQVKFGGRTIPVEVPAAATAADLKRLLQPLTNVLPRGQRLICKGKVLADAASLSSMQVVNGSKVMLMASQGLHQGDGPITKNSSVPAPSTRRASNVKEAQIQKSDTNVSKIRPERWKATGIIALSDSSLKAVPEEVWGCGSSIRVLDVSNNCIEAIPQEIAALRSLQKLILTANDIADGNISWEGLTCVQTLTVLSLSQNRLVTLPSSLGSITHLRELRIANNRLENLPVEIGLLKHLEILIANNNRITSLPSSIGGCESLNEVDLSSNLLAELPEAFGNLQHLKALSVRNNGLTSLPSAFFIKCSQLITLDLHGTEITNDVLRQVDGWEEFDERRRKKHQKQLDFRVGSSVVFDEGADDDYRRL</sequence>
<name>PIRL8_ORYSJ</name>
<dbReference type="EMBL" id="DP000086">
    <property type="protein sequence ID" value="AAP54084.1"/>
    <property type="molecule type" value="Genomic_DNA"/>
</dbReference>
<dbReference type="EMBL" id="DP000086">
    <property type="protein sequence ID" value="ABB47746.1"/>
    <property type="status" value="ALT_SEQ"/>
    <property type="molecule type" value="Genomic_DNA"/>
</dbReference>
<dbReference type="EMBL" id="AP008216">
    <property type="protein sequence ID" value="BAF26667.1"/>
    <property type="molecule type" value="Genomic_DNA"/>
</dbReference>
<dbReference type="EMBL" id="AP014966">
    <property type="status" value="NOT_ANNOTATED_CDS"/>
    <property type="molecule type" value="Genomic_DNA"/>
</dbReference>
<dbReference type="RefSeq" id="XP_015614676.1">
    <property type="nucleotide sequence ID" value="XM_015759190.1"/>
</dbReference>
<dbReference type="SMR" id="Q7XDQ7"/>
<dbReference type="FunCoup" id="Q7XDQ7">
    <property type="interactions" value="1299"/>
</dbReference>
<dbReference type="STRING" id="39947.Q7XDQ7"/>
<dbReference type="PaxDb" id="39947-Q7XDQ7"/>
<dbReference type="KEGG" id="dosa:Os10g0456200"/>
<dbReference type="eggNOG" id="KOG0619">
    <property type="taxonomic scope" value="Eukaryota"/>
</dbReference>
<dbReference type="HOGENOM" id="CLU_000288_18_15_1"/>
<dbReference type="InParanoid" id="Q7XDQ7"/>
<dbReference type="OrthoDB" id="2187496at2759"/>
<dbReference type="Proteomes" id="UP000000763">
    <property type="component" value="Chromosome 10"/>
</dbReference>
<dbReference type="Proteomes" id="UP000059680">
    <property type="component" value="Chromosome 10"/>
</dbReference>
<dbReference type="GO" id="GO:0035556">
    <property type="term" value="P:intracellular signal transduction"/>
    <property type="evidence" value="ECO:0000318"/>
    <property type="project" value="GO_Central"/>
</dbReference>
<dbReference type="Gene3D" id="3.10.20.90">
    <property type="entry name" value="Phosphatidylinositol 3-kinase Catalytic Subunit, Chain A, domain 1"/>
    <property type="match status" value="1"/>
</dbReference>
<dbReference type="Gene3D" id="3.80.10.10">
    <property type="entry name" value="Ribonuclease Inhibitor"/>
    <property type="match status" value="2"/>
</dbReference>
<dbReference type="InterPro" id="IPR001611">
    <property type="entry name" value="Leu-rich_rpt"/>
</dbReference>
<dbReference type="InterPro" id="IPR003591">
    <property type="entry name" value="Leu-rich_rpt_typical-subtyp"/>
</dbReference>
<dbReference type="InterPro" id="IPR032675">
    <property type="entry name" value="LRR_dom_sf"/>
</dbReference>
<dbReference type="InterPro" id="IPR050216">
    <property type="entry name" value="LRR_domain-containing"/>
</dbReference>
<dbReference type="InterPro" id="IPR055414">
    <property type="entry name" value="LRR_R13L4/SHOC2-like"/>
</dbReference>
<dbReference type="InterPro" id="IPR000626">
    <property type="entry name" value="Ubiquitin-like_dom"/>
</dbReference>
<dbReference type="InterPro" id="IPR029071">
    <property type="entry name" value="Ubiquitin-like_domsf"/>
</dbReference>
<dbReference type="PANTHER" id="PTHR48051">
    <property type="match status" value="1"/>
</dbReference>
<dbReference type="PANTHER" id="PTHR48051:SF1">
    <property type="entry name" value="RAS SUPPRESSOR PROTEIN 1"/>
    <property type="match status" value="1"/>
</dbReference>
<dbReference type="Pfam" id="PF23598">
    <property type="entry name" value="LRR_14"/>
    <property type="match status" value="1"/>
</dbReference>
<dbReference type="Pfam" id="PF13855">
    <property type="entry name" value="LRR_8"/>
    <property type="match status" value="1"/>
</dbReference>
<dbReference type="Pfam" id="PF00240">
    <property type="entry name" value="ubiquitin"/>
    <property type="match status" value="1"/>
</dbReference>
<dbReference type="SMART" id="SM00364">
    <property type="entry name" value="LRR_BAC"/>
    <property type="match status" value="5"/>
</dbReference>
<dbReference type="SMART" id="SM00369">
    <property type="entry name" value="LRR_TYP"/>
    <property type="match status" value="6"/>
</dbReference>
<dbReference type="SMART" id="SM00213">
    <property type="entry name" value="UBQ"/>
    <property type="match status" value="1"/>
</dbReference>
<dbReference type="SUPFAM" id="SSF52058">
    <property type="entry name" value="L domain-like"/>
    <property type="match status" value="1"/>
</dbReference>
<dbReference type="SUPFAM" id="SSF54236">
    <property type="entry name" value="Ubiquitin-like"/>
    <property type="match status" value="1"/>
</dbReference>
<dbReference type="PROSITE" id="PS51450">
    <property type="entry name" value="LRR"/>
    <property type="match status" value="6"/>
</dbReference>
<dbReference type="PROSITE" id="PS50053">
    <property type="entry name" value="UBIQUITIN_2"/>
    <property type="match status" value="1"/>
</dbReference>
<comment type="function">
    <text evidence="1">Leucine-rich repeat protein that likely mediates protein interactions, possibly in the context of signal transduction.</text>
</comment>
<comment type="tissue specificity">
    <text evidence="4">Widely expressed except in panicles.</text>
</comment>
<comment type="disruption phenotype">
    <text evidence="4">No visible phenotype.</text>
</comment>
<comment type="similarity">
    <text evidence="5">Belongs to the SHOC2 family.</text>
</comment>
<comment type="sequence caution" evidence="5">
    <conflict type="erroneous gene model prediction">
        <sequence resource="EMBL-CDS" id="ABB47746"/>
    </conflict>
</comment>
<reference key="1">
    <citation type="journal article" date="2003" name="Science">
        <title>In-depth view of structure, activity, and evolution of rice chromosome 10.</title>
        <authorList>
            <person name="Yu Y."/>
            <person name="Rambo T."/>
            <person name="Currie J."/>
            <person name="Saski C."/>
            <person name="Kim H.-R."/>
            <person name="Collura K."/>
            <person name="Thompson S."/>
            <person name="Simmons J."/>
            <person name="Yang T.-J."/>
            <person name="Nah G."/>
            <person name="Patel A.J."/>
            <person name="Thurmond S."/>
            <person name="Henry D."/>
            <person name="Oates R."/>
            <person name="Palmer M."/>
            <person name="Pries G."/>
            <person name="Gibson J."/>
            <person name="Anderson H."/>
            <person name="Paradkar M."/>
            <person name="Crane L."/>
            <person name="Dale J."/>
            <person name="Carver M.B."/>
            <person name="Wood T."/>
            <person name="Frisch D."/>
            <person name="Engler F."/>
            <person name="Soderlund C."/>
            <person name="Palmer L.E."/>
            <person name="Teytelman L."/>
            <person name="Nascimento L."/>
            <person name="De la Bastide M."/>
            <person name="Spiegel L."/>
            <person name="Ware D."/>
            <person name="O'Shaughnessy A."/>
            <person name="Dike S."/>
            <person name="Dedhia N."/>
            <person name="Preston R."/>
            <person name="Huang E."/>
            <person name="Ferraro K."/>
            <person name="Kuit K."/>
            <person name="Miller B."/>
            <person name="Zutavern T."/>
            <person name="Katzenberger F."/>
            <person name="Muller S."/>
            <person name="Balija V."/>
            <person name="Martienssen R.A."/>
            <person name="Stein L."/>
            <person name="Minx P."/>
            <person name="Johnson D."/>
            <person name="Cordum H."/>
            <person name="Mardis E."/>
            <person name="Cheng Z."/>
            <person name="Jiang J."/>
            <person name="Wilson R."/>
            <person name="McCombie W.R."/>
            <person name="Wing R.A."/>
            <person name="Yuan Q."/>
            <person name="Ouyang S."/>
            <person name="Liu J."/>
            <person name="Jones K.M."/>
            <person name="Gansberger K."/>
            <person name="Moffat K."/>
            <person name="Hill J."/>
            <person name="Tsitrin T."/>
            <person name="Overton L."/>
            <person name="Bera J."/>
            <person name="Kim M."/>
            <person name="Jin S."/>
            <person name="Tallon L."/>
            <person name="Ciecko A."/>
            <person name="Pai G."/>
            <person name="Van Aken S."/>
            <person name="Utterback T."/>
            <person name="Reidmuller S."/>
            <person name="Bormann J."/>
            <person name="Feldblyum T."/>
            <person name="Hsiao J."/>
            <person name="Zismann V."/>
            <person name="Blunt S."/>
            <person name="de Vazeille A.R."/>
            <person name="Shaffer T."/>
            <person name="Koo H."/>
            <person name="Suh B."/>
            <person name="Yang Q."/>
            <person name="Haas B."/>
            <person name="Peterson J."/>
            <person name="Pertea M."/>
            <person name="Volfovsky N."/>
            <person name="Wortman J."/>
            <person name="White O."/>
            <person name="Salzberg S.L."/>
            <person name="Fraser C.M."/>
            <person name="Buell C.R."/>
            <person name="Messing J."/>
            <person name="Song R."/>
            <person name="Fuks G."/>
            <person name="Llaca V."/>
            <person name="Kovchak S."/>
            <person name="Young S."/>
            <person name="Bowers J.E."/>
            <person name="Paterson A.H."/>
            <person name="Johns M.A."/>
            <person name="Mao L."/>
            <person name="Pan H."/>
            <person name="Dean R.A."/>
        </authorList>
    </citation>
    <scope>NUCLEOTIDE SEQUENCE [LARGE SCALE GENOMIC DNA]</scope>
    <source>
        <strain>cv. Nipponbare</strain>
    </source>
</reference>
<reference key="2">
    <citation type="journal article" date="2005" name="Nature">
        <title>The map-based sequence of the rice genome.</title>
        <authorList>
            <consortium name="International rice genome sequencing project (IRGSP)"/>
        </authorList>
    </citation>
    <scope>NUCLEOTIDE SEQUENCE [LARGE SCALE GENOMIC DNA]</scope>
    <source>
        <strain>cv. Nipponbare</strain>
    </source>
</reference>
<reference key="3">
    <citation type="journal article" date="2008" name="Nucleic Acids Res.">
        <title>The rice annotation project database (RAP-DB): 2008 update.</title>
        <authorList>
            <consortium name="The rice annotation project (RAP)"/>
        </authorList>
    </citation>
    <scope>GENOME REANNOTATION</scope>
    <source>
        <strain>cv. Nipponbare</strain>
    </source>
</reference>
<reference key="4">
    <citation type="journal article" date="2013" name="Rice">
        <title>Improvement of the Oryza sativa Nipponbare reference genome using next generation sequence and optical map data.</title>
        <authorList>
            <person name="Kawahara Y."/>
            <person name="de la Bastide M."/>
            <person name="Hamilton J.P."/>
            <person name="Kanamori H."/>
            <person name="McCombie W.R."/>
            <person name="Ouyang S."/>
            <person name="Schwartz D.C."/>
            <person name="Tanaka T."/>
            <person name="Wu J."/>
            <person name="Zhou S."/>
            <person name="Childs K.L."/>
            <person name="Davidson R.M."/>
            <person name="Lin H."/>
            <person name="Quesada-Ocampo L."/>
            <person name="Vaillancourt B."/>
            <person name="Sakai H."/>
            <person name="Lee S.S."/>
            <person name="Kim J."/>
            <person name="Numa H."/>
            <person name="Itoh T."/>
            <person name="Buell C.R."/>
            <person name="Matsumoto T."/>
        </authorList>
    </citation>
    <scope>GENOME REANNOTATION</scope>
    <source>
        <strain>cv. Nipponbare</strain>
    </source>
</reference>
<reference key="5">
    <citation type="journal article" date="2010" name="Plant Mol. Biol.">
        <title>Molecular characterization, expression pattern, and functional analysis of the OsIRL gene family encoding intracellular Ras-group-related LRR proteins in rice.</title>
        <authorList>
            <person name="You C."/>
            <person name="Dai X."/>
            <person name="Li X."/>
            <person name="Wang L."/>
            <person name="Chen G."/>
            <person name="Xiao J."/>
            <person name="Wu C."/>
        </authorList>
    </citation>
    <scope>GENE FAMILY</scope>
    <scope>TISSUE SPECIFICITY</scope>
    <scope>DISRUPTION PHENOTYPE</scope>
</reference>
<evidence type="ECO:0000250" key="1"/>
<evidence type="ECO:0000255" key="2">
    <source>
        <dbReference type="PROSITE-ProRule" id="PRU00214"/>
    </source>
</evidence>
<evidence type="ECO:0000256" key="3">
    <source>
        <dbReference type="SAM" id="MobiDB-lite"/>
    </source>
</evidence>
<evidence type="ECO:0000269" key="4">
    <source>
    </source>
</evidence>
<evidence type="ECO:0000305" key="5"/>
<keyword id="KW-0433">Leucine-rich repeat</keyword>
<keyword id="KW-1185">Reference proteome</keyword>
<keyword id="KW-0677">Repeat</keyword>
<proteinExistence type="evidence at transcript level"/>
<organism>
    <name type="scientific">Oryza sativa subsp. japonica</name>
    <name type="common">Rice</name>
    <dbReference type="NCBI Taxonomy" id="39947"/>
    <lineage>
        <taxon>Eukaryota</taxon>
        <taxon>Viridiplantae</taxon>
        <taxon>Streptophyta</taxon>
        <taxon>Embryophyta</taxon>
        <taxon>Tracheophyta</taxon>
        <taxon>Spermatophyta</taxon>
        <taxon>Magnoliopsida</taxon>
        <taxon>Liliopsida</taxon>
        <taxon>Poales</taxon>
        <taxon>Poaceae</taxon>
        <taxon>BOP clade</taxon>
        <taxon>Oryzoideae</taxon>
        <taxon>Oryzeae</taxon>
        <taxon>Oryzinae</taxon>
        <taxon>Oryza</taxon>
        <taxon>Oryza sativa</taxon>
    </lineage>
</organism>
<gene>
    <name type="primary">IRL8</name>
    <name type="ordered locus">Os10g0456200</name>
    <name type="ordered locus">LOC_Os10g31790</name>
</gene>
<protein>
    <recommendedName>
        <fullName>Plant intracellular Ras-group-related LRR protein 8</fullName>
    </recommendedName>
    <alternativeName>
        <fullName>Intracellular Ras-group-related LRR protein 8</fullName>
        <shortName>OsIRL8</shortName>
    </alternativeName>
</protein>